<feature type="chain" id="PRO_1000135029" description="RNA-binding protein Hfq">
    <location>
        <begin position="1"/>
        <end position="83"/>
    </location>
</feature>
<feature type="domain" description="Sm" evidence="2">
    <location>
        <begin position="10"/>
        <end position="70"/>
    </location>
</feature>
<gene>
    <name evidence="1" type="primary">hfq</name>
    <name type="ordered locus">Dhaf_2729</name>
</gene>
<organism>
    <name type="scientific">Desulfitobacterium hafniense (strain DSM 10664 / DCB-2)</name>
    <dbReference type="NCBI Taxonomy" id="272564"/>
    <lineage>
        <taxon>Bacteria</taxon>
        <taxon>Bacillati</taxon>
        <taxon>Bacillota</taxon>
        <taxon>Clostridia</taxon>
        <taxon>Eubacteriales</taxon>
        <taxon>Desulfitobacteriaceae</taxon>
        <taxon>Desulfitobacterium</taxon>
    </lineage>
</organism>
<accession>B8FWE3</accession>
<sequence length="83" mass="9456">MNKAPINLQDTFLNQVRKENMPVTIYLVNGFQLKGLVRGFDNFTVVIEFEGKQQMVYKHAISTVMPLRPINLVAASQSSTEER</sequence>
<keyword id="KW-0694">RNA-binding</keyword>
<keyword id="KW-0346">Stress response</keyword>
<dbReference type="EMBL" id="CP001336">
    <property type="protein sequence ID" value="ACL20755.1"/>
    <property type="molecule type" value="Genomic_DNA"/>
</dbReference>
<dbReference type="RefSeq" id="WP_015944192.1">
    <property type="nucleotide sequence ID" value="NC_011830.1"/>
</dbReference>
<dbReference type="SMR" id="B8FWE3"/>
<dbReference type="KEGG" id="dhd:Dhaf_2729"/>
<dbReference type="HOGENOM" id="CLU_113688_0_2_9"/>
<dbReference type="Proteomes" id="UP000007726">
    <property type="component" value="Chromosome"/>
</dbReference>
<dbReference type="GO" id="GO:0005829">
    <property type="term" value="C:cytosol"/>
    <property type="evidence" value="ECO:0007669"/>
    <property type="project" value="TreeGrafter"/>
</dbReference>
<dbReference type="GO" id="GO:0003723">
    <property type="term" value="F:RNA binding"/>
    <property type="evidence" value="ECO:0007669"/>
    <property type="project" value="UniProtKB-UniRule"/>
</dbReference>
<dbReference type="GO" id="GO:0006355">
    <property type="term" value="P:regulation of DNA-templated transcription"/>
    <property type="evidence" value="ECO:0007669"/>
    <property type="project" value="InterPro"/>
</dbReference>
<dbReference type="GO" id="GO:0043487">
    <property type="term" value="P:regulation of RNA stability"/>
    <property type="evidence" value="ECO:0007669"/>
    <property type="project" value="TreeGrafter"/>
</dbReference>
<dbReference type="GO" id="GO:0045974">
    <property type="term" value="P:regulation of translation, ncRNA-mediated"/>
    <property type="evidence" value="ECO:0007669"/>
    <property type="project" value="TreeGrafter"/>
</dbReference>
<dbReference type="CDD" id="cd01716">
    <property type="entry name" value="Hfq"/>
    <property type="match status" value="1"/>
</dbReference>
<dbReference type="FunFam" id="2.30.30.100:FF:000012">
    <property type="entry name" value="RNA-binding protein Hfq"/>
    <property type="match status" value="1"/>
</dbReference>
<dbReference type="Gene3D" id="2.30.30.100">
    <property type="match status" value="1"/>
</dbReference>
<dbReference type="HAMAP" id="MF_00436">
    <property type="entry name" value="Hfq"/>
    <property type="match status" value="1"/>
</dbReference>
<dbReference type="InterPro" id="IPR005001">
    <property type="entry name" value="Hfq"/>
</dbReference>
<dbReference type="InterPro" id="IPR010920">
    <property type="entry name" value="LSM_dom_sf"/>
</dbReference>
<dbReference type="InterPro" id="IPR047575">
    <property type="entry name" value="Sm"/>
</dbReference>
<dbReference type="NCBIfam" id="TIGR02383">
    <property type="entry name" value="Hfq"/>
    <property type="match status" value="1"/>
</dbReference>
<dbReference type="NCBIfam" id="NF001602">
    <property type="entry name" value="PRK00395.1"/>
    <property type="match status" value="1"/>
</dbReference>
<dbReference type="PANTHER" id="PTHR34772">
    <property type="entry name" value="RNA-BINDING PROTEIN HFQ"/>
    <property type="match status" value="1"/>
</dbReference>
<dbReference type="PANTHER" id="PTHR34772:SF1">
    <property type="entry name" value="RNA-BINDING PROTEIN HFQ"/>
    <property type="match status" value="1"/>
</dbReference>
<dbReference type="Pfam" id="PF17209">
    <property type="entry name" value="Hfq"/>
    <property type="match status" value="1"/>
</dbReference>
<dbReference type="SUPFAM" id="SSF50182">
    <property type="entry name" value="Sm-like ribonucleoproteins"/>
    <property type="match status" value="1"/>
</dbReference>
<dbReference type="PROSITE" id="PS52002">
    <property type="entry name" value="SM"/>
    <property type="match status" value="1"/>
</dbReference>
<reference key="1">
    <citation type="journal article" date="2012" name="BMC Microbiol.">
        <title>Genome sequence of Desulfitobacterium hafniense DCB-2, a Gram-positive anaerobe capable of dehalogenation and metal reduction.</title>
        <authorList>
            <person name="Kim S.H."/>
            <person name="Harzman C."/>
            <person name="Davis J.K."/>
            <person name="Hutcheson R."/>
            <person name="Broderick J.B."/>
            <person name="Marsh T.L."/>
            <person name="Tiedje J.M."/>
        </authorList>
    </citation>
    <scope>NUCLEOTIDE SEQUENCE [LARGE SCALE GENOMIC DNA]</scope>
    <source>
        <strain>DSM 10664 / DCB-2</strain>
    </source>
</reference>
<protein>
    <recommendedName>
        <fullName evidence="1">RNA-binding protein Hfq</fullName>
    </recommendedName>
</protein>
<proteinExistence type="inferred from homology"/>
<name>HFQ_DESHD</name>
<evidence type="ECO:0000255" key="1">
    <source>
        <dbReference type="HAMAP-Rule" id="MF_00436"/>
    </source>
</evidence>
<evidence type="ECO:0000255" key="2">
    <source>
        <dbReference type="PROSITE-ProRule" id="PRU01346"/>
    </source>
</evidence>
<comment type="function">
    <text evidence="1">RNA chaperone that binds small regulatory RNA (sRNAs) and mRNAs to facilitate mRNA translational regulation in response to envelope stress, environmental stress and changes in metabolite concentrations. Also binds with high specificity to tRNAs.</text>
</comment>
<comment type="subunit">
    <text evidence="1">Homohexamer.</text>
</comment>
<comment type="similarity">
    <text evidence="1">Belongs to the Hfq family.</text>
</comment>